<feature type="chain" id="PRO_1000004804" description="Phosphomethylpyrimidine synthase">
    <location>
        <begin position="1"/>
        <end position="608"/>
    </location>
</feature>
<feature type="binding site" evidence="1">
    <location>
        <position position="216"/>
    </location>
    <ligand>
        <name>substrate</name>
    </ligand>
</feature>
<feature type="binding site" evidence="1">
    <location>
        <position position="245"/>
    </location>
    <ligand>
        <name>substrate</name>
    </ligand>
</feature>
<feature type="binding site" evidence="1">
    <location>
        <position position="274"/>
    </location>
    <ligand>
        <name>substrate</name>
    </ligand>
</feature>
<feature type="binding site" evidence="1">
    <location>
        <position position="310"/>
    </location>
    <ligand>
        <name>substrate</name>
    </ligand>
</feature>
<feature type="binding site" evidence="1">
    <location>
        <begin position="330"/>
        <end position="332"/>
    </location>
    <ligand>
        <name>substrate</name>
    </ligand>
</feature>
<feature type="binding site" evidence="1">
    <location>
        <begin position="371"/>
        <end position="374"/>
    </location>
    <ligand>
        <name>substrate</name>
    </ligand>
</feature>
<feature type="binding site" evidence="1">
    <location>
        <position position="410"/>
    </location>
    <ligand>
        <name>substrate</name>
    </ligand>
</feature>
<feature type="binding site" evidence="1">
    <location>
        <position position="414"/>
    </location>
    <ligand>
        <name>Zn(2+)</name>
        <dbReference type="ChEBI" id="CHEBI:29105"/>
    </ligand>
</feature>
<feature type="binding site" evidence="1">
    <location>
        <position position="437"/>
    </location>
    <ligand>
        <name>substrate</name>
    </ligand>
</feature>
<feature type="binding site" evidence="1">
    <location>
        <position position="478"/>
    </location>
    <ligand>
        <name>Zn(2+)</name>
        <dbReference type="ChEBI" id="CHEBI:29105"/>
    </ligand>
</feature>
<feature type="binding site" evidence="1">
    <location>
        <position position="558"/>
    </location>
    <ligand>
        <name>[4Fe-4S] cluster</name>
        <dbReference type="ChEBI" id="CHEBI:49883"/>
        <note>4Fe-4S-S-AdoMet</note>
    </ligand>
</feature>
<feature type="binding site" evidence="1">
    <location>
        <position position="561"/>
    </location>
    <ligand>
        <name>[4Fe-4S] cluster</name>
        <dbReference type="ChEBI" id="CHEBI:49883"/>
        <note>4Fe-4S-S-AdoMet</note>
    </ligand>
</feature>
<feature type="binding site" evidence="1">
    <location>
        <position position="566"/>
    </location>
    <ligand>
        <name>[4Fe-4S] cluster</name>
        <dbReference type="ChEBI" id="CHEBI:49883"/>
        <note>4Fe-4S-S-AdoMet</note>
    </ligand>
</feature>
<evidence type="ECO:0000255" key="1">
    <source>
        <dbReference type="HAMAP-Rule" id="MF_00089"/>
    </source>
</evidence>
<organism>
    <name type="scientific">Ruegeria sp. (strain TM1040)</name>
    <name type="common">Silicibacter sp.</name>
    <dbReference type="NCBI Taxonomy" id="292414"/>
    <lineage>
        <taxon>Bacteria</taxon>
        <taxon>Pseudomonadati</taxon>
        <taxon>Pseudomonadota</taxon>
        <taxon>Alphaproteobacteria</taxon>
        <taxon>Rhodobacterales</taxon>
        <taxon>Roseobacteraceae</taxon>
        <taxon>Ruegeria</taxon>
    </lineage>
</organism>
<keyword id="KW-0004">4Fe-4S</keyword>
<keyword id="KW-0408">Iron</keyword>
<keyword id="KW-0411">Iron-sulfur</keyword>
<keyword id="KW-0456">Lyase</keyword>
<keyword id="KW-0479">Metal-binding</keyword>
<keyword id="KW-1185">Reference proteome</keyword>
<keyword id="KW-0949">S-adenosyl-L-methionine</keyword>
<keyword id="KW-0784">Thiamine biosynthesis</keyword>
<keyword id="KW-0862">Zinc</keyword>
<proteinExistence type="inferred from homology"/>
<comment type="function">
    <text evidence="1">Catalyzes the synthesis of the hydroxymethylpyrimidine phosphate (HMP-P) moiety of thiamine from aminoimidazole ribotide (AIR) in a radical S-adenosyl-L-methionine (SAM)-dependent reaction.</text>
</comment>
<comment type="catalytic activity">
    <reaction evidence="1">
        <text>5-amino-1-(5-phospho-beta-D-ribosyl)imidazole + S-adenosyl-L-methionine = 4-amino-2-methyl-5-(phosphooxymethyl)pyrimidine + CO + 5'-deoxyadenosine + formate + L-methionine + 3 H(+)</text>
        <dbReference type="Rhea" id="RHEA:24840"/>
        <dbReference type="ChEBI" id="CHEBI:15378"/>
        <dbReference type="ChEBI" id="CHEBI:15740"/>
        <dbReference type="ChEBI" id="CHEBI:17245"/>
        <dbReference type="ChEBI" id="CHEBI:17319"/>
        <dbReference type="ChEBI" id="CHEBI:57844"/>
        <dbReference type="ChEBI" id="CHEBI:58354"/>
        <dbReference type="ChEBI" id="CHEBI:59789"/>
        <dbReference type="ChEBI" id="CHEBI:137981"/>
        <dbReference type="EC" id="4.1.99.17"/>
    </reaction>
</comment>
<comment type="cofactor">
    <cofactor evidence="1">
        <name>[4Fe-4S] cluster</name>
        <dbReference type="ChEBI" id="CHEBI:49883"/>
    </cofactor>
    <text evidence="1">Binds 1 [4Fe-4S] cluster per subunit. The cluster is coordinated with 3 cysteines and an exchangeable S-adenosyl-L-methionine.</text>
</comment>
<comment type="pathway">
    <text evidence="1">Cofactor biosynthesis; thiamine diphosphate biosynthesis.</text>
</comment>
<comment type="subunit">
    <text evidence="1">Homodimer.</text>
</comment>
<comment type="similarity">
    <text evidence="1">Belongs to the ThiC family.</text>
</comment>
<reference key="1">
    <citation type="submission" date="2006-05" db="EMBL/GenBank/DDBJ databases">
        <title>Complete sequence of chromosome of Silicibacter sp. TM1040.</title>
        <authorList>
            <consortium name="US DOE Joint Genome Institute"/>
            <person name="Copeland A."/>
            <person name="Lucas S."/>
            <person name="Lapidus A."/>
            <person name="Barry K."/>
            <person name="Detter J.C."/>
            <person name="Glavina del Rio T."/>
            <person name="Hammon N."/>
            <person name="Israni S."/>
            <person name="Dalin E."/>
            <person name="Tice H."/>
            <person name="Pitluck S."/>
            <person name="Brettin T."/>
            <person name="Bruce D."/>
            <person name="Han C."/>
            <person name="Tapia R."/>
            <person name="Goodwin L."/>
            <person name="Thompson L.S."/>
            <person name="Gilna P."/>
            <person name="Schmutz J."/>
            <person name="Larimer F."/>
            <person name="Land M."/>
            <person name="Hauser L."/>
            <person name="Kyrpides N."/>
            <person name="Kim E."/>
            <person name="Belas R."/>
            <person name="Moran M.A."/>
            <person name="Buchan A."/>
            <person name="Gonzalez J.M."/>
            <person name="Schell M.A."/>
            <person name="Sun F."/>
            <person name="Richardson P."/>
        </authorList>
    </citation>
    <scope>NUCLEOTIDE SEQUENCE [LARGE SCALE GENOMIC DNA]</scope>
    <source>
        <strain>TM1040</strain>
    </source>
</reference>
<name>THIC_RUEST</name>
<gene>
    <name evidence="1" type="primary">thiC</name>
    <name type="ordered locus">TM1040_2054</name>
</gene>
<protein>
    <recommendedName>
        <fullName evidence="1">Phosphomethylpyrimidine synthase</fullName>
        <ecNumber evidence="1">4.1.99.17</ecNumber>
    </recommendedName>
    <alternativeName>
        <fullName evidence="1">Hydroxymethylpyrimidine phosphate synthase</fullName>
        <shortName evidence="1">HMP-P synthase</shortName>
        <shortName evidence="1">HMP-phosphate synthase</shortName>
        <shortName evidence="1">HMPP synthase</shortName>
    </alternativeName>
    <alternativeName>
        <fullName evidence="1">Thiamine biosynthesis protein ThiC</fullName>
    </alternativeName>
</protein>
<accession>Q1GEY0</accession>
<dbReference type="EC" id="4.1.99.17" evidence="1"/>
<dbReference type="EMBL" id="CP000377">
    <property type="protein sequence ID" value="ABF64786.1"/>
    <property type="molecule type" value="Genomic_DNA"/>
</dbReference>
<dbReference type="RefSeq" id="WP_011539378.1">
    <property type="nucleotide sequence ID" value="NC_008044.1"/>
</dbReference>
<dbReference type="SMR" id="Q1GEY0"/>
<dbReference type="STRING" id="292414.TM1040_2054"/>
<dbReference type="KEGG" id="sit:TM1040_2054"/>
<dbReference type="eggNOG" id="COG0422">
    <property type="taxonomic scope" value="Bacteria"/>
</dbReference>
<dbReference type="HOGENOM" id="CLU_013181_2_1_5"/>
<dbReference type="OrthoDB" id="9805897at2"/>
<dbReference type="UniPathway" id="UPA00060"/>
<dbReference type="Proteomes" id="UP000000636">
    <property type="component" value="Chromosome"/>
</dbReference>
<dbReference type="GO" id="GO:0005829">
    <property type="term" value="C:cytosol"/>
    <property type="evidence" value="ECO:0007669"/>
    <property type="project" value="TreeGrafter"/>
</dbReference>
<dbReference type="GO" id="GO:0051539">
    <property type="term" value="F:4 iron, 4 sulfur cluster binding"/>
    <property type="evidence" value="ECO:0007669"/>
    <property type="project" value="UniProtKB-KW"/>
</dbReference>
<dbReference type="GO" id="GO:0016830">
    <property type="term" value="F:carbon-carbon lyase activity"/>
    <property type="evidence" value="ECO:0007669"/>
    <property type="project" value="InterPro"/>
</dbReference>
<dbReference type="GO" id="GO:0008270">
    <property type="term" value="F:zinc ion binding"/>
    <property type="evidence" value="ECO:0007669"/>
    <property type="project" value="UniProtKB-UniRule"/>
</dbReference>
<dbReference type="GO" id="GO:0009228">
    <property type="term" value="P:thiamine biosynthetic process"/>
    <property type="evidence" value="ECO:0007669"/>
    <property type="project" value="UniProtKB-KW"/>
</dbReference>
<dbReference type="GO" id="GO:0009229">
    <property type="term" value="P:thiamine diphosphate biosynthetic process"/>
    <property type="evidence" value="ECO:0007669"/>
    <property type="project" value="UniProtKB-UniRule"/>
</dbReference>
<dbReference type="FunFam" id="3.20.20.540:FF:000001">
    <property type="entry name" value="Phosphomethylpyrimidine synthase"/>
    <property type="match status" value="1"/>
</dbReference>
<dbReference type="Gene3D" id="6.10.250.620">
    <property type="match status" value="1"/>
</dbReference>
<dbReference type="Gene3D" id="3.20.20.540">
    <property type="entry name" value="Radical SAM ThiC family, central domain"/>
    <property type="match status" value="1"/>
</dbReference>
<dbReference type="HAMAP" id="MF_00089">
    <property type="entry name" value="ThiC"/>
    <property type="match status" value="1"/>
</dbReference>
<dbReference type="InterPro" id="IPR037509">
    <property type="entry name" value="ThiC"/>
</dbReference>
<dbReference type="InterPro" id="IPR025747">
    <property type="entry name" value="ThiC-associated_dom"/>
</dbReference>
<dbReference type="InterPro" id="IPR038521">
    <property type="entry name" value="ThiC/Bza_core_dom"/>
</dbReference>
<dbReference type="InterPro" id="IPR002817">
    <property type="entry name" value="ThiC/BzaA/B"/>
</dbReference>
<dbReference type="NCBIfam" id="NF006763">
    <property type="entry name" value="PRK09284.1"/>
    <property type="match status" value="1"/>
</dbReference>
<dbReference type="NCBIfam" id="NF009895">
    <property type="entry name" value="PRK13352.1"/>
    <property type="match status" value="1"/>
</dbReference>
<dbReference type="NCBIfam" id="TIGR00190">
    <property type="entry name" value="thiC"/>
    <property type="match status" value="1"/>
</dbReference>
<dbReference type="PANTHER" id="PTHR30557:SF1">
    <property type="entry name" value="PHOSPHOMETHYLPYRIMIDINE SYNTHASE, CHLOROPLASTIC"/>
    <property type="match status" value="1"/>
</dbReference>
<dbReference type="PANTHER" id="PTHR30557">
    <property type="entry name" value="THIAMINE BIOSYNTHESIS PROTEIN THIC"/>
    <property type="match status" value="1"/>
</dbReference>
<dbReference type="Pfam" id="PF13667">
    <property type="entry name" value="ThiC-associated"/>
    <property type="match status" value="1"/>
</dbReference>
<dbReference type="Pfam" id="PF01964">
    <property type="entry name" value="ThiC_Rad_SAM"/>
    <property type="match status" value="1"/>
</dbReference>
<dbReference type="SFLD" id="SFLDF00407">
    <property type="entry name" value="phosphomethylpyrimidine_syntha"/>
    <property type="match status" value="1"/>
</dbReference>
<dbReference type="SFLD" id="SFLDG01114">
    <property type="entry name" value="phosphomethylpyrimidine_syntha"/>
    <property type="match status" value="1"/>
</dbReference>
<dbReference type="SFLD" id="SFLDS00113">
    <property type="entry name" value="Radical_SAM_Phosphomethylpyrim"/>
    <property type="match status" value="1"/>
</dbReference>
<sequence>MNTPTRHPTPNVTTGALPASRKIYVAGEMHEGIRVPMREIATHPTAGEAPLPVYDSSGPYTDPDVSTDIREGLAPLRAAWIKARCDVEAYSGRDVTAADNGFVEGDRLVPEFPVKPAPLRGRQRAAPTQLAYARAGIITPEMEFVAIRENQLRDLSPCHCARDGEDFGANIPDYVTPEFVRAEIAAGRAIIPANINHPELEPMIIGRNFKVKINANMGTSSVTSSMEEEVDKLVWAIRWGADTVMDLSTGRNIHNTREWIIRNSPVPIGTVPIYQALEKVNGIAEDLTWEVFRDTLIEQAEQGVDYFTIHAGVRLHMVPMTVERVTGIVSRGGSIMAKWCLHHHRESFLYEHFEEICDICRQYDVSFSLGDGLRPGSIADANDAAQFAELETLGELTKIAWAKDCQVMIEGPGHVAMHKIKENMDKQLECCHEAPFYTLGPLTTDIAPGYDHITSGIGAAMIGWFGCAMLCYVTPKEHLGLPDRDDVKTGVITYKIAAHAADLAKGLPGAQRRDDALSRARFEFRWEDQFNLSLDPETAQSFHDETLPKEAHKVAHFCSMCGPKFCSMRISHDIRAEAQKEGFEAMAAKFREGGELYVPLKDTAPEEA</sequence>